<proteinExistence type="inferred from homology"/>
<sequence>MGRKWANIVAKKTAKDGATSKIYAKFGVEIYAAAKQGEPDPELNTSLKFVIERAKQAQVPKHVIDKAIDKAKGGGDETFVQGRYEGFGPNGSMIIAETLTSNVNRTIANVRTIFNKKGGNIGAAGSVSYMFDNTGVIVFKGTDPDHIFEILLEAEVDVRDVTEEEGNIVIYTEPTDLHKGIAALKAAGITEFSTTELEMIAQSEVELSPEDLEIFEGLVDALEDDDDVQKVYHNVANL</sequence>
<name>YEEN_ECOL5</name>
<keyword id="KW-0963">Cytoplasm</keyword>
<keyword id="KW-0238">DNA-binding</keyword>
<keyword id="KW-0804">Transcription</keyword>
<keyword id="KW-0805">Transcription regulation</keyword>
<feature type="chain" id="PRO_0000257065" description="Probable transcriptional regulatory protein YeeN">
    <location>
        <begin position="1"/>
        <end position="238"/>
    </location>
</feature>
<accession>Q0TGH3</accession>
<comment type="subcellular location">
    <subcellularLocation>
        <location evidence="1">Cytoplasm</location>
    </subcellularLocation>
</comment>
<comment type="similarity">
    <text evidence="1">Belongs to the TACO1 family. YeeN subfamily.</text>
</comment>
<evidence type="ECO:0000255" key="1">
    <source>
        <dbReference type="HAMAP-Rule" id="MF_00918"/>
    </source>
</evidence>
<dbReference type="EMBL" id="CP000247">
    <property type="protein sequence ID" value="ABG69956.1"/>
    <property type="molecule type" value="Genomic_DNA"/>
</dbReference>
<dbReference type="RefSeq" id="WP_000532923.1">
    <property type="nucleotide sequence ID" value="NC_008253.1"/>
</dbReference>
<dbReference type="SMR" id="Q0TGH3"/>
<dbReference type="KEGG" id="ecp:ECP_1956"/>
<dbReference type="HOGENOM" id="CLU_062974_2_0_6"/>
<dbReference type="Proteomes" id="UP000009182">
    <property type="component" value="Chromosome"/>
</dbReference>
<dbReference type="GO" id="GO:0005829">
    <property type="term" value="C:cytosol"/>
    <property type="evidence" value="ECO:0007669"/>
    <property type="project" value="TreeGrafter"/>
</dbReference>
<dbReference type="GO" id="GO:0003677">
    <property type="term" value="F:DNA binding"/>
    <property type="evidence" value="ECO:0007669"/>
    <property type="project" value="UniProtKB-UniRule"/>
</dbReference>
<dbReference type="GO" id="GO:0006355">
    <property type="term" value="P:regulation of DNA-templated transcription"/>
    <property type="evidence" value="ECO:0007669"/>
    <property type="project" value="UniProtKB-UniRule"/>
</dbReference>
<dbReference type="FunFam" id="1.10.10.200:FF:000003">
    <property type="entry name" value="Probable transcriptional regulatory protein YeeN"/>
    <property type="match status" value="1"/>
</dbReference>
<dbReference type="FunFam" id="3.30.70.980:FF:000004">
    <property type="entry name" value="Probable transcriptional regulatory protein YeeN"/>
    <property type="match status" value="1"/>
</dbReference>
<dbReference type="Gene3D" id="1.10.10.200">
    <property type="match status" value="1"/>
</dbReference>
<dbReference type="Gene3D" id="3.30.70.980">
    <property type="match status" value="2"/>
</dbReference>
<dbReference type="HAMAP" id="MF_00693">
    <property type="entry name" value="Transcrip_reg_TACO1"/>
    <property type="match status" value="1"/>
</dbReference>
<dbReference type="HAMAP" id="MF_00918">
    <property type="entry name" value="Transcrip_reg_TACO1_YeeN"/>
    <property type="match status" value="1"/>
</dbReference>
<dbReference type="InterPro" id="IPR017856">
    <property type="entry name" value="Integrase-like_N"/>
</dbReference>
<dbReference type="InterPro" id="IPR048300">
    <property type="entry name" value="TACO1_YebC-like_2nd/3rd_dom"/>
</dbReference>
<dbReference type="InterPro" id="IPR049083">
    <property type="entry name" value="TACO1_YebC_N"/>
</dbReference>
<dbReference type="InterPro" id="IPR002876">
    <property type="entry name" value="Transcrip_reg_TACO1-like"/>
</dbReference>
<dbReference type="InterPro" id="IPR026564">
    <property type="entry name" value="Transcrip_reg_TACO1-like_dom3"/>
</dbReference>
<dbReference type="InterPro" id="IPR026562">
    <property type="entry name" value="Transcrip_reg_TACO1_YeeN"/>
</dbReference>
<dbReference type="InterPro" id="IPR029072">
    <property type="entry name" value="YebC-like"/>
</dbReference>
<dbReference type="NCBIfam" id="NF009044">
    <property type="entry name" value="PRK12378.1"/>
    <property type="match status" value="1"/>
</dbReference>
<dbReference type="NCBIfam" id="TIGR01033">
    <property type="entry name" value="YebC/PmpR family DNA-binding transcriptional regulator"/>
    <property type="match status" value="1"/>
</dbReference>
<dbReference type="PANTHER" id="PTHR12532">
    <property type="entry name" value="TRANSLATIONAL ACTIVATOR OF CYTOCHROME C OXIDASE 1"/>
    <property type="match status" value="1"/>
</dbReference>
<dbReference type="PANTHER" id="PTHR12532:SF0">
    <property type="entry name" value="TRANSLATIONAL ACTIVATOR OF CYTOCHROME C OXIDASE 1"/>
    <property type="match status" value="1"/>
</dbReference>
<dbReference type="Pfam" id="PF20772">
    <property type="entry name" value="TACO1_YebC_N"/>
    <property type="match status" value="1"/>
</dbReference>
<dbReference type="Pfam" id="PF01709">
    <property type="entry name" value="Transcrip_reg"/>
    <property type="match status" value="1"/>
</dbReference>
<dbReference type="SUPFAM" id="SSF75625">
    <property type="entry name" value="YebC-like"/>
    <property type="match status" value="1"/>
</dbReference>
<organism>
    <name type="scientific">Escherichia coli O6:K15:H31 (strain 536 / UPEC)</name>
    <dbReference type="NCBI Taxonomy" id="362663"/>
    <lineage>
        <taxon>Bacteria</taxon>
        <taxon>Pseudomonadati</taxon>
        <taxon>Pseudomonadota</taxon>
        <taxon>Gammaproteobacteria</taxon>
        <taxon>Enterobacterales</taxon>
        <taxon>Enterobacteriaceae</taxon>
        <taxon>Escherichia</taxon>
    </lineage>
</organism>
<reference key="1">
    <citation type="journal article" date="2006" name="Mol. Microbiol.">
        <title>Role of pathogenicity island-associated integrases in the genome plasticity of uropathogenic Escherichia coli strain 536.</title>
        <authorList>
            <person name="Hochhut B."/>
            <person name="Wilde C."/>
            <person name="Balling G."/>
            <person name="Middendorf B."/>
            <person name="Dobrindt U."/>
            <person name="Brzuszkiewicz E."/>
            <person name="Gottschalk G."/>
            <person name="Carniel E."/>
            <person name="Hacker J."/>
        </authorList>
    </citation>
    <scope>NUCLEOTIDE SEQUENCE [LARGE SCALE GENOMIC DNA]</scope>
    <source>
        <strain>536 / UPEC</strain>
    </source>
</reference>
<protein>
    <recommendedName>
        <fullName evidence="1">Probable transcriptional regulatory protein YeeN</fullName>
    </recommendedName>
</protein>
<gene>
    <name evidence="1" type="primary">yeeN</name>
    <name type="ordered locus">ECP_1956</name>
</gene>